<name>CBID_SALPC</name>
<evidence type="ECO:0000255" key="1">
    <source>
        <dbReference type="HAMAP-Rule" id="MF_00787"/>
    </source>
</evidence>
<organism>
    <name type="scientific">Salmonella paratyphi C (strain RKS4594)</name>
    <dbReference type="NCBI Taxonomy" id="476213"/>
    <lineage>
        <taxon>Bacteria</taxon>
        <taxon>Pseudomonadati</taxon>
        <taxon>Pseudomonadota</taxon>
        <taxon>Gammaproteobacteria</taxon>
        <taxon>Enterobacterales</taxon>
        <taxon>Enterobacteriaceae</taxon>
        <taxon>Salmonella</taxon>
    </lineage>
</organism>
<feature type="chain" id="PRO_1000148483" description="Cobalt-precorrin-5B C(1)-methyltransferase">
    <location>
        <begin position="1"/>
        <end position="379"/>
    </location>
</feature>
<reference key="1">
    <citation type="journal article" date="2009" name="PLoS ONE">
        <title>Salmonella paratyphi C: genetic divergence from Salmonella choleraesuis and pathogenic convergence with Salmonella typhi.</title>
        <authorList>
            <person name="Liu W.-Q."/>
            <person name="Feng Y."/>
            <person name="Wang Y."/>
            <person name="Zou Q.-H."/>
            <person name="Chen F."/>
            <person name="Guo J.-T."/>
            <person name="Peng Y.-H."/>
            <person name="Jin Y."/>
            <person name="Li Y.-G."/>
            <person name="Hu S.-N."/>
            <person name="Johnston R.N."/>
            <person name="Liu G.-R."/>
            <person name="Liu S.-L."/>
        </authorList>
    </citation>
    <scope>NUCLEOTIDE SEQUENCE [LARGE SCALE GENOMIC DNA]</scope>
    <source>
        <strain>RKS4594</strain>
    </source>
</reference>
<sequence length="379" mass="40756">MSELSFDAPVWHHGKALRKGYTTGSCATAAAKVAALMVLRQHLIHQVSIVTPSGVTLCLNVESPHIEGQQAIAAIRKDGGDDVDATHGMLIFARVTLNDSGEITLTGGEGIGTVTRKGVGLPLGSAAINRTPRHTIESAVREAIGPARGADVEIFAPEGEARAQKTYNSRLGILGGISIIGTTGIVTPMSEESWKRSLSLELEIKRASGLTRVILVPGNHGERFVREQMGVDTQAVVTMSNFVGYMIEEAVRLGFCQIVLVGHPGKLIKIAAGIFHTHSHIADARMETLVAHLALLGAPLELLTLVGDCDTTEAAMEHIEAYGFGHIYNHLARRICLRVMQMLRFTKTPPVCDAILFSFDNHILGSNRPVDEIAKELQC</sequence>
<proteinExistence type="inferred from homology"/>
<accession>C0Q1P4</accession>
<protein>
    <recommendedName>
        <fullName evidence="1">Cobalt-precorrin-5B C(1)-methyltransferase</fullName>
        <ecNumber evidence="1">2.1.1.195</ecNumber>
    </recommendedName>
    <alternativeName>
        <fullName evidence="1">Cobalt-precorrin-6A synthase</fullName>
    </alternativeName>
</protein>
<keyword id="KW-0169">Cobalamin biosynthesis</keyword>
<keyword id="KW-0489">Methyltransferase</keyword>
<keyword id="KW-0949">S-adenosyl-L-methionine</keyword>
<keyword id="KW-0808">Transferase</keyword>
<comment type="function">
    <text evidence="1">Catalyzes the methylation of C-1 in cobalt-precorrin-5B to form cobalt-precorrin-6A.</text>
</comment>
<comment type="catalytic activity">
    <reaction evidence="1">
        <text>Co-precorrin-5B + S-adenosyl-L-methionine = Co-precorrin-6A + S-adenosyl-L-homocysteine</text>
        <dbReference type="Rhea" id="RHEA:26285"/>
        <dbReference type="ChEBI" id="CHEBI:57856"/>
        <dbReference type="ChEBI" id="CHEBI:59789"/>
        <dbReference type="ChEBI" id="CHEBI:60063"/>
        <dbReference type="ChEBI" id="CHEBI:60064"/>
        <dbReference type="EC" id="2.1.1.195"/>
    </reaction>
</comment>
<comment type="pathway">
    <text evidence="1">Cofactor biosynthesis; adenosylcobalamin biosynthesis; cob(II)yrinate a,c-diamide from sirohydrochlorin (anaerobic route): step 6/10.</text>
</comment>
<comment type="similarity">
    <text evidence="1">Belongs to the CbiD family.</text>
</comment>
<dbReference type="EC" id="2.1.1.195" evidence="1"/>
<dbReference type="EMBL" id="CP000857">
    <property type="protein sequence ID" value="ACN45830.1"/>
    <property type="molecule type" value="Genomic_DNA"/>
</dbReference>
<dbReference type="RefSeq" id="WP_001292914.1">
    <property type="nucleotide sequence ID" value="NC_012125.1"/>
</dbReference>
<dbReference type="SMR" id="C0Q1P4"/>
<dbReference type="KEGG" id="sei:SPC_1683"/>
<dbReference type="HOGENOM" id="CLU_041273_1_0_6"/>
<dbReference type="UniPathway" id="UPA00148">
    <property type="reaction ID" value="UER00227"/>
</dbReference>
<dbReference type="Proteomes" id="UP000001599">
    <property type="component" value="Chromosome"/>
</dbReference>
<dbReference type="GO" id="GO:0043780">
    <property type="term" value="F:cobalt-precorrin-5B C1-methyltransferase activity"/>
    <property type="evidence" value="ECO:0007669"/>
    <property type="project" value="RHEA"/>
</dbReference>
<dbReference type="GO" id="GO:0019251">
    <property type="term" value="P:anaerobic cobalamin biosynthetic process"/>
    <property type="evidence" value="ECO:0007669"/>
    <property type="project" value="UniProtKB-UniRule"/>
</dbReference>
<dbReference type="GO" id="GO:0032259">
    <property type="term" value="P:methylation"/>
    <property type="evidence" value="ECO:0007669"/>
    <property type="project" value="UniProtKB-KW"/>
</dbReference>
<dbReference type="Gene3D" id="3.30.2110.10">
    <property type="entry name" value="CbiD-like"/>
    <property type="match status" value="1"/>
</dbReference>
<dbReference type="HAMAP" id="MF_00787">
    <property type="entry name" value="CbiD"/>
    <property type="match status" value="1"/>
</dbReference>
<dbReference type="InterPro" id="IPR002748">
    <property type="entry name" value="CbiD"/>
</dbReference>
<dbReference type="InterPro" id="IPR036074">
    <property type="entry name" value="CbiD_sf"/>
</dbReference>
<dbReference type="NCBIfam" id="TIGR00312">
    <property type="entry name" value="cbiD"/>
    <property type="match status" value="1"/>
</dbReference>
<dbReference type="PANTHER" id="PTHR35863">
    <property type="entry name" value="COBALT-PRECORRIN-5B C(1)-METHYLTRANSFERASE"/>
    <property type="match status" value="1"/>
</dbReference>
<dbReference type="PANTHER" id="PTHR35863:SF1">
    <property type="entry name" value="COBALT-PRECORRIN-5B C(1)-METHYLTRANSFERASE"/>
    <property type="match status" value="1"/>
</dbReference>
<dbReference type="Pfam" id="PF01888">
    <property type="entry name" value="CbiD"/>
    <property type="match status" value="1"/>
</dbReference>
<dbReference type="PIRSF" id="PIRSF026782">
    <property type="entry name" value="CbiD"/>
    <property type="match status" value="1"/>
</dbReference>
<dbReference type="SUPFAM" id="SSF111342">
    <property type="entry name" value="CbiD-like"/>
    <property type="match status" value="1"/>
</dbReference>
<gene>
    <name evidence="1" type="primary">cbiD</name>
    <name type="ordered locus">SPC_1683</name>
</gene>